<name>Y1090_RENSM</name>
<keyword id="KW-1185">Reference proteome</keyword>
<sequence>MRTKIELGKLGENLAADFLERRGFRIVDTNWRCPSGEIDLVAFDGEFLVIAEVKARRSLRYGHPFEAITDAKLRRLRTLAVLWARHHGFFSSPIRIDAVAVLIPQGEEPRLEHLRGLG</sequence>
<feature type="chain" id="PRO_0000336243" description="UPF0102 protein RSal33209_1090">
    <location>
        <begin position="1"/>
        <end position="118"/>
    </location>
</feature>
<proteinExistence type="inferred from homology"/>
<comment type="similarity">
    <text evidence="1">Belongs to the UPF0102 family.</text>
</comment>
<comment type="sequence caution" evidence="2">
    <conflict type="erroneous initiation">
        <sequence resource="EMBL-CDS" id="ABY22828"/>
    </conflict>
</comment>
<reference key="1">
    <citation type="journal article" date="2008" name="J. Bacteriol.">
        <title>Genome sequence of the fish pathogen Renibacterium salmoninarum suggests reductive evolution away from an environmental Arthrobacter ancestor.</title>
        <authorList>
            <person name="Wiens G.D."/>
            <person name="Rockey D.D."/>
            <person name="Wu Z."/>
            <person name="Chang J."/>
            <person name="Levy R."/>
            <person name="Crane S."/>
            <person name="Chen D.S."/>
            <person name="Capri G.R."/>
            <person name="Burnett J.R."/>
            <person name="Sudheesh P.S."/>
            <person name="Schipma M.J."/>
            <person name="Burd H."/>
            <person name="Bhattacharyya A."/>
            <person name="Rhodes L.D."/>
            <person name="Kaul R."/>
            <person name="Strom M.S."/>
        </authorList>
    </citation>
    <scope>NUCLEOTIDE SEQUENCE [LARGE SCALE GENOMIC DNA]</scope>
    <source>
        <strain>ATCC 33209 / DSM 20767 / JCM 11484 / NBRC 15589 / NCIMB 2235</strain>
    </source>
</reference>
<organism>
    <name type="scientific">Renibacterium salmoninarum (strain ATCC 33209 / DSM 20767 / JCM 11484 / NBRC 15589 / NCIMB 2235)</name>
    <dbReference type="NCBI Taxonomy" id="288705"/>
    <lineage>
        <taxon>Bacteria</taxon>
        <taxon>Bacillati</taxon>
        <taxon>Actinomycetota</taxon>
        <taxon>Actinomycetes</taxon>
        <taxon>Micrococcales</taxon>
        <taxon>Micrococcaceae</taxon>
        <taxon>Renibacterium</taxon>
    </lineage>
</organism>
<evidence type="ECO:0000255" key="1">
    <source>
        <dbReference type="HAMAP-Rule" id="MF_00048"/>
    </source>
</evidence>
<evidence type="ECO:0000305" key="2"/>
<dbReference type="EMBL" id="CP000910">
    <property type="protein sequence ID" value="ABY22828.1"/>
    <property type="status" value="ALT_INIT"/>
    <property type="molecule type" value="Genomic_DNA"/>
</dbReference>
<dbReference type="RefSeq" id="WP_041685198.1">
    <property type="nucleotide sequence ID" value="NC_010168.1"/>
</dbReference>
<dbReference type="SMR" id="A9WP53"/>
<dbReference type="STRING" id="288705.RSal33209_1090"/>
<dbReference type="KEGG" id="rsa:RSal33209_1090"/>
<dbReference type="eggNOG" id="COG0792">
    <property type="taxonomic scope" value="Bacteria"/>
</dbReference>
<dbReference type="HOGENOM" id="CLU_115353_2_0_11"/>
<dbReference type="Proteomes" id="UP000002007">
    <property type="component" value="Chromosome"/>
</dbReference>
<dbReference type="GO" id="GO:0003676">
    <property type="term" value="F:nucleic acid binding"/>
    <property type="evidence" value="ECO:0007669"/>
    <property type="project" value="InterPro"/>
</dbReference>
<dbReference type="CDD" id="cd20736">
    <property type="entry name" value="PoNe_Nuclease"/>
    <property type="match status" value="1"/>
</dbReference>
<dbReference type="Gene3D" id="3.40.1350.10">
    <property type="match status" value="1"/>
</dbReference>
<dbReference type="HAMAP" id="MF_00048">
    <property type="entry name" value="UPF0102"/>
    <property type="match status" value="1"/>
</dbReference>
<dbReference type="InterPro" id="IPR011335">
    <property type="entry name" value="Restrct_endonuc-II-like"/>
</dbReference>
<dbReference type="InterPro" id="IPR011856">
    <property type="entry name" value="tRNA_endonuc-like_dom_sf"/>
</dbReference>
<dbReference type="InterPro" id="IPR003509">
    <property type="entry name" value="UPF0102_YraN-like"/>
</dbReference>
<dbReference type="NCBIfam" id="NF009150">
    <property type="entry name" value="PRK12497.1-3"/>
    <property type="match status" value="1"/>
</dbReference>
<dbReference type="NCBIfam" id="NF009154">
    <property type="entry name" value="PRK12497.3-3"/>
    <property type="match status" value="1"/>
</dbReference>
<dbReference type="PANTHER" id="PTHR34039">
    <property type="entry name" value="UPF0102 PROTEIN YRAN"/>
    <property type="match status" value="1"/>
</dbReference>
<dbReference type="PANTHER" id="PTHR34039:SF1">
    <property type="entry name" value="UPF0102 PROTEIN YRAN"/>
    <property type="match status" value="1"/>
</dbReference>
<dbReference type="Pfam" id="PF02021">
    <property type="entry name" value="UPF0102"/>
    <property type="match status" value="1"/>
</dbReference>
<dbReference type="SUPFAM" id="SSF52980">
    <property type="entry name" value="Restriction endonuclease-like"/>
    <property type="match status" value="1"/>
</dbReference>
<gene>
    <name type="ordered locus">RSal33209_1090</name>
</gene>
<protein>
    <recommendedName>
        <fullName evidence="1">UPF0102 protein RSal33209_1090</fullName>
    </recommendedName>
</protein>
<accession>A9WP53</accession>